<reference key="1">
    <citation type="journal article" date="1996" name="Yeast">
        <title>The sequence of a 30 kb fragment on the left arm of chromosome XV from Saccharomyces cerevisiae reveals 15 open reading frames, five of which correspond to previously identified genes.</title>
        <authorList>
            <person name="Sterky F."/>
            <person name="Holmberg A."/>
            <person name="Pettersson B."/>
            <person name="Uhlen M."/>
        </authorList>
    </citation>
    <scope>NUCLEOTIDE SEQUENCE [GENOMIC DNA]</scope>
</reference>
<reference key="2">
    <citation type="journal article" date="1997" name="Nature">
        <title>The nucleotide sequence of Saccharomyces cerevisiae chromosome XV.</title>
        <authorList>
            <person name="Dujon B."/>
            <person name="Albermann K."/>
            <person name="Aldea M."/>
            <person name="Alexandraki D."/>
            <person name="Ansorge W."/>
            <person name="Arino J."/>
            <person name="Benes V."/>
            <person name="Bohn C."/>
            <person name="Bolotin-Fukuhara M."/>
            <person name="Bordonne R."/>
            <person name="Boyer J."/>
            <person name="Camasses A."/>
            <person name="Casamayor A."/>
            <person name="Casas C."/>
            <person name="Cheret G."/>
            <person name="Cziepluch C."/>
            <person name="Daignan-Fornier B."/>
            <person name="Dang V.-D."/>
            <person name="de Haan M."/>
            <person name="Delius H."/>
            <person name="Durand P."/>
            <person name="Fairhead C."/>
            <person name="Feldmann H."/>
            <person name="Gaillon L."/>
            <person name="Galisson F."/>
            <person name="Gamo F.-J."/>
            <person name="Gancedo C."/>
            <person name="Goffeau A."/>
            <person name="Goulding S.E."/>
            <person name="Grivell L.A."/>
            <person name="Habbig B."/>
            <person name="Hand N.J."/>
            <person name="Hani J."/>
            <person name="Hattenhorst U."/>
            <person name="Hebling U."/>
            <person name="Hernando Y."/>
            <person name="Herrero E."/>
            <person name="Heumann K."/>
            <person name="Hiesel R."/>
            <person name="Hilger F."/>
            <person name="Hofmann B."/>
            <person name="Hollenberg C.P."/>
            <person name="Hughes B."/>
            <person name="Jauniaux J.-C."/>
            <person name="Kalogeropoulos A."/>
            <person name="Katsoulou C."/>
            <person name="Kordes E."/>
            <person name="Lafuente M.J."/>
            <person name="Landt O."/>
            <person name="Louis E.J."/>
            <person name="Maarse A.C."/>
            <person name="Madania A."/>
            <person name="Mannhaupt G."/>
            <person name="Marck C."/>
            <person name="Martin R.P."/>
            <person name="Mewes H.-W."/>
            <person name="Michaux G."/>
            <person name="Paces V."/>
            <person name="Parle-McDermott A.G."/>
            <person name="Pearson B.M."/>
            <person name="Perrin A."/>
            <person name="Pettersson B."/>
            <person name="Poch O."/>
            <person name="Pohl T.M."/>
            <person name="Poirey R."/>
            <person name="Portetelle D."/>
            <person name="Pujol A."/>
            <person name="Purnelle B."/>
            <person name="Ramezani Rad M."/>
            <person name="Rechmann S."/>
            <person name="Schwager C."/>
            <person name="Schweizer M."/>
            <person name="Sor F."/>
            <person name="Sterky F."/>
            <person name="Tarassov I.A."/>
            <person name="Teodoru C."/>
            <person name="Tettelin H."/>
            <person name="Thierry A."/>
            <person name="Tobiasch E."/>
            <person name="Tzermia M."/>
            <person name="Uhlen M."/>
            <person name="Unseld M."/>
            <person name="Valens M."/>
            <person name="Vandenbol M."/>
            <person name="Vetter I."/>
            <person name="Vlcek C."/>
            <person name="Voet M."/>
            <person name="Volckaert G."/>
            <person name="Voss H."/>
            <person name="Wambutt R."/>
            <person name="Wedler H."/>
            <person name="Wiemann S."/>
            <person name="Winsor B."/>
            <person name="Wolfe K.H."/>
            <person name="Zollner A."/>
            <person name="Zumstein E."/>
            <person name="Kleine K."/>
        </authorList>
    </citation>
    <scope>NUCLEOTIDE SEQUENCE [LARGE SCALE GENOMIC DNA]</scope>
    <source>
        <strain>ATCC 204508 / S288c</strain>
    </source>
</reference>
<reference key="3">
    <citation type="journal article" date="2014" name="G3 (Bethesda)">
        <title>The reference genome sequence of Saccharomyces cerevisiae: Then and now.</title>
        <authorList>
            <person name="Engel S.R."/>
            <person name="Dietrich F.S."/>
            <person name="Fisk D.G."/>
            <person name="Binkley G."/>
            <person name="Balakrishnan R."/>
            <person name="Costanzo M.C."/>
            <person name="Dwight S.S."/>
            <person name="Hitz B.C."/>
            <person name="Karra K."/>
            <person name="Nash R.S."/>
            <person name="Weng S."/>
            <person name="Wong E.D."/>
            <person name="Lloyd P."/>
            <person name="Skrzypek M.S."/>
            <person name="Miyasato S.R."/>
            <person name="Simison M."/>
            <person name="Cherry J.M."/>
        </authorList>
    </citation>
    <scope>GENOME REANNOTATION</scope>
    <source>
        <strain>ATCC 204508 / S288c</strain>
    </source>
</reference>
<reference key="4">
    <citation type="journal article" date="2000" name="FEBS Lett.">
        <title>Genomic exploration of the hemiascomycetous yeasts: 4. The genome of Saccharomyces cerevisiae revisited.</title>
        <authorList>
            <person name="Blandin G."/>
            <person name="Durrens P."/>
            <person name="Tekaia F."/>
            <person name="Aigle M."/>
            <person name="Bolotin-Fukuhara M."/>
            <person name="Bon E."/>
            <person name="Casaregola S."/>
            <person name="de Montigny J."/>
            <person name="Gaillardin C."/>
            <person name="Lepingle A."/>
            <person name="Llorente B."/>
            <person name="Malpertuy A."/>
            <person name="Neuveglise C."/>
            <person name="Ozier-Kalogeropoulos O."/>
            <person name="Perrin A."/>
            <person name="Potier S."/>
            <person name="Souciet J.-L."/>
            <person name="Talla E."/>
            <person name="Toffano-Nioche C."/>
            <person name="Wesolowski-Louvel M."/>
            <person name="Marck C."/>
            <person name="Dujon B."/>
        </authorList>
    </citation>
    <scope>GENOME REANNOTATION</scope>
</reference>
<proteinExistence type="uncertain"/>
<name>YO08B_YEAST</name>
<dbReference type="EMBL" id="U43491">
    <property type="status" value="NOT_ANNOTATED_CDS"/>
    <property type="molecule type" value="Genomic_DNA"/>
</dbReference>
<dbReference type="EMBL" id="Z74916">
    <property type="status" value="NOT_ANNOTATED_CDS"/>
    <property type="molecule type" value="Genomic_DNA"/>
</dbReference>
<dbReference type="EMBL" id="Z74917">
    <property type="status" value="NOT_ANNOTATED_CDS"/>
    <property type="molecule type" value="Genomic_DNA"/>
</dbReference>
<dbReference type="STRING" id="4932.YOR008W-B"/>
<dbReference type="PaxDb" id="4932-YOR008W-B"/>
<dbReference type="EnsemblFungi" id="YOR008W-B_mRNA">
    <property type="protein sequence ID" value="YOR008W-B"/>
    <property type="gene ID" value="YOR008W-B"/>
</dbReference>
<dbReference type="AGR" id="SGD:S000007628"/>
<dbReference type="SGD" id="S000007628">
    <property type="gene designation" value="YOR008W-B"/>
</dbReference>
<dbReference type="HOGENOM" id="CLU_3385031_0_0_1"/>
<comment type="caution">
    <text evidence="1">Product of a dubious gene prediction unlikely to encode a functional protein. Because of that it is not part of the S.cerevisiae S288c complete/reference proteome set.</text>
</comment>
<sequence length="33" mass="3813">MATKGNLKRQTKYFSTIAYTETRGEATLRANYQ</sequence>
<gene>
    <name type="ordered locus">YOR008W-B</name>
</gene>
<feature type="chain" id="PRO_0000309057" description="Putative uncharacterized protein YOR008W-B">
    <location>
        <begin position="1"/>
        <end position="33"/>
    </location>
</feature>
<organism>
    <name type="scientific">Saccharomyces cerevisiae (strain ATCC 204508 / S288c)</name>
    <name type="common">Baker's yeast</name>
    <dbReference type="NCBI Taxonomy" id="559292"/>
    <lineage>
        <taxon>Eukaryota</taxon>
        <taxon>Fungi</taxon>
        <taxon>Dikarya</taxon>
        <taxon>Ascomycota</taxon>
        <taxon>Saccharomycotina</taxon>
        <taxon>Saccharomycetes</taxon>
        <taxon>Saccharomycetales</taxon>
        <taxon>Saccharomycetaceae</taxon>
        <taxon>Saccharomyces</taxon>
    </lineage>
</organism>
<accession>P0C5Q9</accession>
<protein>
    <recommendedName>
        <fullName>Putative uncharacterized protein YOR008W-B</fullName>
    </recommendedName>
</protein>
<evidence type="ECO:0000305" key="1">
    <source>
    </source>
</evidence>